<keyword id="KW-0472">Membrane</keyword>
<keyword id="KW-0602">Photosynthesis</keyword>
<keyword id="KW-0604">Photosystem II</keyword>
<keyword id="KW-0674">Reaction center</keyword>
<keyword id="KW-0793">Thylakoid</keyword>
<keyword id="KW-0812">Transmembrane</keyword>
<keyword id="KW-1133">Transmembrane helix</keyword>
<proteinExistence type="inferred from homology"/>
<protein>
    <recommendedName>
        <fullName evidence="1">Photosystem II reaction center protein J</fullName>
        <shortName evidence="1">PSII-J</shortName>
    </recommendedName>
</protein>
<dbReference type="EMBL" id="CP001344">
    <property type="protein sequence ID" value="ACL44591.1"/>
    <property type="molecule type" value="Genomic_DNA"/>
</dbReference>
<dbReference type="SMR" id="B8HVD9"/>
<dbReference type="STRING" id="395961.Cyan7425_2230"/>
<dbReference type="KEGG" id="cyn:Cyan7425_2230"/>
<dbReference type="eggNOG" id="ENOG5033ABP">
    <property type="taxonomic scope" value="Bacteria"/>
</dbReference>
<dbReference type="HOGENOM" id="CLU_215151_0_0_3"/>
<dbReference type="OrthoDB" id="466474at2"/>
<dbReference type="GO" id="GO:0009539">
    <property type="term" value="C:photosystem II reaction center"/>
    <property type="evidence" value="ECO:0007669"/>
    <property type="project" value="InterPro"/>
</dbReference>
<dbReference type="GO" id="GO:0031676">
    <property type="term" value="C:plasma membrane-derived thylakoid membrane"/>
    <property type="evidence" value="ECO:0007669"/>
    <property type="project" value="UniProtKB-SubCell"/>
</dbReference>
<dbReference type="GO" id="GO:0015979">
    <property type="term" value="P:photosynthesis"/>
    <property type="evidence" value="ECO:0007669"/>
    <property type="project" value="UniProtKB-UniRule"/>
</dbReference>
<dbReference type="Gene3D" id="6.10.250.2070">
    <property type="match status" value="1"/>
</dbReference>
<dbReference type="HAMAP" id="MF_01305">
    <property type="entry name" value="PSII_PsbJ"/>
    <property type="match status" value="1"/>
</dbReference>
<dbReference type="InterPro" id="IPR002682">
    <property type="entry name" value="PSII_PsbJ"/>
</dbReference>
<dbReference type="InterPro" id="IPR037267">
    <property type="entry name" value="PSII_PsbJ_sf"/>
</dbReference>
<dbReference type="NCBIfam" id="NF002722">
    <property type="entry name" value="PRK02565.1"/>
    <property type="match status" value="1"/>
</dbReference>
<dbReference type="PANTHER" id="PTHR34812">
    <property type="entry name" value="PHOTOSYSTEM II REACTION CENTER PROTEIN J"/>
    <property type="match status" value="1"/>
</dbReference>
<dbReference type="PANTHER" id="PTHR34812:SF3">
    <property type="entry name" value="PHOTOSYSTEM II REACTION CENTER PROTEIN J"/>
    <property type="match status" value="1"/>
</dbReference>
<dbReference type="Pfam" id="PF01788">
    <property type="entry name" value="PsbJ"/>
    <property type="match status" value="1"/>
</dbReference>
<dbReference type="SUPFAM" id="SSF161021">
    <property type="entry name" value="Photosystem II reaction center protein J, PsbJ"/>
    <property type="match status" value="1"/>
</dbReference>
<evidence type="ECO:0000255" key="1">
    <source>
        <dbReference type="HAMAP-Rule" id="MF_01305"/>
    </source>
</evidence>
<organism>
    <name type="scientific">Cyanothece sp. (strain PCC 7425 / ATCC 29141)</name>
    <dbReference type="NCBI Taxonomy" id="395961"/>
    <lineage>
        <taxon>Bacteria</taxon>
        <taxon>Bacillati</taxon>
        <taxon>Cyanobacteriota</taxon>
        <taxon>Cyanophyceae</taxon>
        <taxon>Gomontiellales</taxon>
        <taxon>Cyanothecaceae</taxon>
        <taxon>Cyanothece</taxon>
    </lineage>
</organism>
<accession>B8HVD9</accession>
<reference key="1">
    <citation type="journal article" date="2011" name="MBio">
        <title>Novel metabolic attributes of the genus Cyanothece, comprising a group of unicellular nitrogen-fixing Cyanobacteria.</title>
        <authorList>
            <person name="Bandyopadhyay A."/>
            <person name="Elvitigala T."/>
            <person name="Welsh E."/>
            <person name="Stockel J."/>
            <person name="Liberton M."/>
            <person name="Min H."/>
            <person name="Sherman L.A."/>
            <person name="Pakrasi H.B."/>
        </authorList>
    </citation>
    <scope>NUCLEOTIDE SEQUENCE [LARGE SCALE GENOMIC DNA]</scope>
    <source>
        <strain>PCC 7425 / ATCC 29141</strain>
    </source>
</reference>
<sequence>MTESGRIPLWLVATVAGMGVITLLGIFFYGAYAGLGSAV</sequence>
<name>PSBJ_CYAP4</name>
<comment type="function">
    <text evidence="1">One of the components of the core complex of photosystem II (PSII). PSII is a light-driven water:plastoquinone oxidoreductase that uses light energy to abstract electrons from H(2)O, generating O(2) and a proton gradient subsequently used for ATP formation. It consists of a core antenna complex that captures photons, and an electron transfer chain that converts photonic excitation into a charge separation.</text>
</comment>
<comment type="subunit">
    <text evidence="1">PSII is composed of 1 copy each of membrane proteins PsbA, PsbB, PsbC, PsbD, PsbE, PsbF, PsbH, PsbI, PsbJ, PsbK, PsbL, PsbM, PsbT, PsbX, PsbY, PsbZ, Psb30/Ycf12, peripheral proteins PsbO, CyanoQ (PsbQ), PsbU, PsbV and a large number of cofactors. It forms dimeric complexes.</text>
</comment>
<comment type="subcellular location">
    <subcellularLocation>
        <location evidence="1">Cellular thylakoid membrane</location>
        <topology evidence="1">Single-pass membrane protein</topology>
    </subcellularLocation>
</comment>
<comment type="similarity">
    <text evidence="1">Belongs to the PsbJ family.</text>
</comment>
<feature type="chain" id="PRO_1000165372" description="Photosystem II reaction center protein J">
    <location>
        <begin position="1"/>
        <end position="39"/>
    </location>
</feature>
<feature type="transmembrane region" description="Helical" evidence="1">
    <location>
        <begin position="7"/>
        <end position="27"/>
    </location>
</feature>
<gene>
    <name evidence="1" type="primary">psbJ</name>
    <name type="ordered locus">Cyan7425_2230</name>
</gene>